<dbReference type="EC" id="1.8.1.2"/>
<dbReference type="EMBL" id="CU329670">
    <property type="protein sequence ID" value="CAB11176.1"/>
    <property type="molecule type" value="Genomic_DNA"/>
</dbReference>
<dbReference type="RefSeq" id="NP_593252.1">
    <property type="nucleotide sequence ID" value="NM_001018649.2"/>
</dbReference>
<dbReference type="SMR" id="Q1K9C2"/>
<dbReference type="BioGRID" id="279361">
    <property type="interactions" value="8"/>
</dbReference>
<dbReference type="FunCoup" id="Q1K9C2">
    <property type="interactions" value="24"/>
</dbReference>
<dbReference type="STRING" id="284812.Q1K9C2"/>
<dbReference type="iPTMnet" id="Q1K9C2"/>
<dbReference type="SwissPalm" id="Q1K9C2"/>
<dbReference type="PaxDb" id="4896-SPAC10F6.01c.1"/>
<dbReference type="EnsemblFungi" id="SPAC10F6.01c.1">
    <property type="protein sequence ID" value="SPAC10F6.01c.1:pep"/>
    <property type="gene ID" value="SPAC10F6.01c"/>
</dbReference>
<dbReference type="GeneID" id="2542920"/>
<dbReference type="KEGG" id="spo:2542920"/>
<dbReference type="PomBase" id="SPAC10F6.01c">
    <property type="gene designation" value="sir1"/>
</dbReference>
<dbReference type="VEuPathDB" id="FungiDB:SPAC10F6.01c"/>
<dbReference type="eggNOG" id="KOG0560">
    <property type="taxonomic scope" value="Eukaryota"/>
</dbReference>
<dbReference type="HOGENOM" id="CLU_001975_1_0_1"/>
<dbReference type="InParanoid" id="Q1K9C2"/>
<dbReference type="OMA" id="YGSYTQV"/>
<dbReference type="PhylomeDB" id="Q1K9C2"/>
<dbReference type="UniPathway" id="UPA00140">
    <property type="reaction ID" value="UER00207"/>
</dbReference>
<dbReference type="PRO" id="PR:Q1K9C2"/>
<dbReference type="Proteomes" id="UP000002485">
    <property type="component" value="Chromosome I"/>
</dbReference>
<dbReference type="GO" id="GO:0005829">
    <property type="term" value="C:cytosol"/>
    <property type="evidence" value="ECO:0007005"/>
    <property type="project" value="PomBase"/>
</dbReference>
<dbReference type="GO" id="GO:0009337">
    <property type="term" value="C:sulfite reductase complex (NADPH)"/>
    <property type="evidence" value="ECO:0000318"/>
    <property type="project" value="GO_Central"/>
</dbReference>
<dbReference type="GO" id="GO:0051539">
    <property type="term" value="F:4 iron, 4 sulfur cluster binding"/>
    <property type="evidence" value="ECO:0007669"/>
    <property type="project" value="UniProtKB-KW"/>
</dbReference>
<dbReference type="GO" id="GO:0010181">
    <property type="term" value="F:FMN binding"/>
    <property type="evidence" value="ECO:0007669"/>
    <property type="project" value="InterPro"/>
</dbReference>
<dbReference type="GO" id="GO:0020037">
    <property type="term" value="F:heme binding"/>
    <property type="evidence" value="ECO:0007669"/>
    <property type="project" value="InterPro"/>
</dbReference>
<dbReference type="GO" id="GO:0046872">
    <property type="term" value="F:metal ion binding"/>
    <property type="evidence" value="ECO:0007669"/>
    <property type="project" value="UniProtKB-KW"/>
</dbReference>
<dbReference type="GO" id="GO:0004783">
    <property type="term" value="F:sulfite reductase (NADPH) activity"/>
    <property type="evidence" value="ECO:0007669"/>
    <property type="project" value="UniProtKB-EC"/>
</dbReference>
<dbReference type="GO" id="GO:0070814">
    <property type="term" value="P:hydrogen sulfide biosynthetic process"/>
    <property type="evidence" value="ECO:0007669"/>
    <property type="project" value="UniProtKB-UniPathway"/>
</dbReference>
<dbReference type="GO" id="GO:0000103">
    <property type="term" value="P:sulfate assimilation"/>
    <property type="evidence" value="ECO:0000315"/>
    <property type="project" value="PomBase"/>
</dbReference>
<dbReference type="FunFam" id="3.40.50.920:FF:000007">
    <property type="entry name" value="Pyruvate:ferredoxin (Flavodoxin) oxidoreductase"/>
    <property type="match status" value="1"/>
</dbReference>
<dbReference type="FunFam" id="3.30.413.10:FF:000003">
    <property type="entry name" value="Sulfite reductase [NADPH] hemoprotein beta-component"/>
    <property type="match status" value="1"/>
</dbReference>
<dbReference type="FunFam" id="3.40.50.970:FF:000051">
    <property type="entry name" value="Sulfite reductase beta subunit"/>
    <property type="match status" value="1"/>
</dbReference>
<dbReference type="FunFam" id="3.90.480.20:FF:000012">
    <property type="entry name" value="Sulfite reductase beta subunit"/>
    <property type="match status" value="1"/>
</dbReference>
<dbReference type="FunFam" id="3.40.50.360:FF:000016">
    <property type="entry name" value="Sulfite reductase subunit beta"/>
    <property type="match status" value="1"/>
</dbReference>
<dbReference type="Gene3D" id="3.40.50.360">
    <property type="match status" value="1"/>
</dbReference>
<dbReference type="Gene3D" id="3.40.50.920">
    <property type="match status" value="1"/>
</dbReference>
<dbReference type="Gene3D" id="3.40.50.970">
    <property type="match status" value="2"/>
</dbReference>
<dbReference type="Gene3D" id="3.30.413.10">
    <property type="entry name" value="Sulfite Reductase Hemoprotein, domain 1"/>
    <property type="match status" value="2"/>
</dbReference>
<dbReference type="InterPro" id="IPR001094">
    <property type="entry name" value="Flavdoxin-like"/>
</dbReference>
<dbReference type="InterPro" id="IPR008254">
    <property type="entry name" value="Flavodoxin/NO_synth"/>
</dbReference>
<dbReference type="InterPro" id="IPR029039">
    <property type="entry name" value="Flavoprotein-like_sf"/>
</dbReference>
<dbReference type="InterPro" id="IPR005117">
    <property type="entry name" value="NiRdtase/SiRdtase_haem-b_fer"/>
</dbReference>
<dbReference type="InterPro" id="IPR036136">
    <property type="entry name" value="Nit/Sulf_reduc_fer-like_dom_sf"/>
</dbReference>
<dbReference type="InterPro" id="IPR006067">
    <property type="entry name" value="NO2/SO3_Rdtase_4Fe4S_dom"/>
</dbReference>
<dbReference type="InterPro" id="IPR045169">
    <property type="entry name" value="NO2/SO3_Rdtase_4Fe4S_prot"/>
</dbReference>
<dbReference type="InterPro" id="IPR045854">
    <property type="entry name" value="NO2/SO3_Rdtase_4Fe4S_sf"/>
</dbReference>
<dbReference type="InterPro" id="IPR006066">
    <property type="entry name" value="NO2/SO3_Rdtase_FeS/sirohaem_BS"/>
</dbReference>
<dbReference type="InterPro" id="IPR029061">
    <property type="entry name" value="THDP-binding"/>
</dbReference>
<dbReference type="InterPro" id="IPR009014">
    <property type="entry name" value="Transketo_C/PFOR_II"/>
</dbReference>
<dbReference type="NCBIfam" id="NF010029">
    <property type="entry name" value="PRK13504.1"/>
    <property type="match status" value="1"/>
</dbReference>
<dbReference type="PANTHER" id="PTHR11493:SF47">
    <property type="entry name" value="SULFITE REDUCTASE [NADPH] SUBUNIT BETA"/>
    <property type="match status" value="1"/>
</dbReference>
<dbReference type="PANTHER" id="PTHR11493">
    <property type="entry name" value="SULFITE REDUCTASE [NADPH] SUBUNIT BETA-RELATED"/>
    <property type="match status" value="1"/>
</dbReference>
<dbReference type="Pfam" id="PF00258">
    <property type="entry name" value="Flavodoxin_1"/>
    <property type="match status" value="1"/>
</dbReference>
<dbReference type="Pfam" id="PF01077">
    <property type="entry name" value="NIR_SIR"/>
    <property type="match status" value="1"/>
</dbReference>
<dbReference type="Pfam" id="PF03460">
    <property type="entry name" value="NIR_SIR_ferr"/>
    <property type="match status" value="2"/>
</dbReference>
<dbReference type="PRINTS" id="PR00369">
    <property type="entry name" value="FLAVODOXIN"/>
</dbReference>
<dbReference type="PRINTS" id="PR00397">
    <property type="entry name" value="SIROHAEM"/>
</dbReference>
<dbReference type="SUPFAM" id="SSF52218">
    <property type="entry name" value="Flavoproteins"/>
    <property type="match status" value="1"/>
</dbReference>
<dbReference type="SUPFAM" id="SSF56014">
    <property type="entry name" value="Nitrite and sulphite reductase 4Fe-4S domain-like"/>
    <property type="match status" value="2"/>
</dbReference>
<dbReference type="SUPFAM" id="SSF55124">
    <property type="entry name" value="Nitrite/Sulfite reductase N-terminal domain-like"/>
    <property type="match status" value="2"/>
</dbReference>
<dbReference type="SUPFAM" id="SSF52518">
    <property type="entry name" value="Thiamin diphosphate-binding fold (THDP-binding)"/>
    <property type="match status" value="1"/>
</dbReference>
<dbReference type="SUPFAM" id="SSF52922">
    <property type="entry name" value="TK C-terminal domain-like"/>
    <property type="match status" value="1"/>
</dbReference>
<dbReference type="PROSITE" id="PS50902">
    <property type="entry name" value="FLAVODOXIN_LIKE"/>
    <property type="match status" value="1"/>
</dbReference>
<evidence type="ECO:0000250" key="1">
    <source>
        <dbReference type="UniProtKB" id="P17846"/>
    </source>
</evidence>
<evidence type="ECO:0000250" key="2">
    <source>
        <dbReference type="UniProtKB" id="P47169"/>
    </source>
</evidence>
<evidence type="ECO:0000255" key="3"/>
<evidence type="ECO:0000255" key="4">
    <source>
        <dbReference type="PROSITE-ProRule" id="PRU00088"/>
    </source>
</evidence>
<evidence type="ECO:0000269" key="5">
    <source>
    </source>
</evidence>
<evidence type="ECO:0000305" key="6"/>
<evidence type="ECO:0000312" key="7">
    <source>
        <dbReference type="EMBL" id="CAB11176.1"/>
    </source>
</evidence>
<comment type="function">
    <text evidence="2">Catalyzes the reduction of sulfite to sulfide, one of several activities required for the biosynthesis of L-cysteine from sulfate.</text>
</comment>
<comment type="catalytic activity">
    <reaction evidence="2">
        <text>hydrogen sulfide + 3 NADP(+) + 3 H2O = sulfite + 3 NADPH + 4 H(+)</text>
        <dbReference type="Rhea" id="RHEA:13801"/>
        <dbReference type="ChEBI" id="CHEBI:15377"/>
        <dbReference type="ChEBI" id="CHEBI:15378"/>
        <dbReference type="ChEBI" id="CHEBI:17359"/>
        <dbReference type="ChEBI" id="CHEBI:29919"/>
        <dbReference type="ChEBI" id="CHEBI:57783"/>
        <dbReference type="ChEBI" id="CHEBI:58349"/>
        <dbReference type="EC" id="1.8.1.2"/>
    </reaction>
</comment>
<comment type="cofactor">
    <cofactor evidence="1">
        <name>siroheme</name>
        <dbReference type="ChEBI" id="CHEBI:60052"/>
    </cofactor>
    <text evidence="1">Binds 1 siroheme per subunit.</text>
</comment>
<comment type="cofactor">
    <cofactor evidence="1">
        <name>[4Fe-4S] cluster</name>
        <dbReference type="ChEBI" id="CHEBI:49883"/>
    </cofactor>
    <text evidence="1">Binds 1 [4Fe-4S] cluster per subunit.</text>
</comment>
<comment type="pathway">
    <text>Sulfur metabolism; hydrogen sulfide biosynthesis; hydrogen sulfide from sulfite (NADPH route): step 1/1.</text>
</comment>
<comment type="subunit">
    <text evidence="2">Alpha(2)-beta(2). The alpha component is a flavoprotein, the beta component is a hemoprotein (By similarity).</text>
</comment>
<comment type="subcellular location">
    <subcellularLocation>
        <location evidence="5">Cytoplasm</location>
    </subcellularLocation>
</comment>
<comment type="similarity">
    <text evidence="3">Belongs to the nitrite and sulfite reductase 4Fe-4S domain family.</text>
</comment>
<feature type="chain" id="PRO_0000316860" description="Sulfite reductase [NADPH] subunit beta">
    <location>
        <begin position="1"/>
        <end position="1473"/>
    </location>
</feature>
<feature type="domain" description="Flavodoxin-like" evidence="4">
    <location>
        <begin position="728"/>
        <end position="876"/>
    </location>
</feature>
<feature type="binding site" evidence="1">
    <location>
        <position position="1328"/>
    </location>
    <ligand>
        <name>[4Fe-4S] cluster</name>
        <dbReference type="ChEBI" id="CHEBI:49883"/>
    </ligand>
</feature>
<feature type="binding site" evidence="1">
    <location>
        <position position="1334"/>
    </location>
    <ligand>
        <name>[4Fe-4S] cluster</name>
        <dbReference type="ChEBI" id="CHEBI:49883"/>
    </ligand>
</feature>
<feature type="binding site" evidence="1">
    <location>
        <position position="1373"/>
    </location>
    <ligand>
        <name>[4Fe-4S] cluster</name>
        <dbReference type="ChEBI" id="CHEBI:49883"/>
    </ligand>
</feature>
<feature type="binding site" evidence="1">
    <location>
        <position position="1377"/>
    </location>
    <ligand>
        <name>[4Fe-4S] cluster</name>
        <dbReference type="ChEBI" id="CHEBI:49883"/>
    </ligand>
</feature>
<feature type="binding site" description="axial binding residue" evidence="1">
    <location>
        <position position="1377"/>
    </location>
    <ligand>
        <name>siroheme</name>
        <dbReference type="ChEBI" id="CHEBI:60052"/>
    </ligand>
    <ligandPart>
        <name>Fe</name>
        <dbReference type="ChEBI" id="CHEBI:18248"/>
    </ligandPart>
</feature>
<accession>Q1K9C2</accession>
<proteinExistence type="inferred from homology"/>
<name>MET5_SCHPO</name>
<protein>
    <recommendedName>
        <fullName>Sulfite reductase [NADPH] subunit beta</fullName>
        <ecNumber>1.8.1.2</ecNumber>
    </recommendedName>
</protein>
<keyword id="KW-0004">4Fe-4S</keyword>
<keyword id="KW-0963">Cytoplasm</keyword>
<keyword id="KW-0349">Heme</keyword>
<keyword id="KW-0408">Iron</keyword>
<keyword id="KW-0411">Iron-sulfur</keyword>
<keyword id="KW-0479">Metal-binding</keyword>
<keyword id="KW-0521">NADP</keyword>
<keyword id="KW-0560">Oxidoreductase</keyword>
<keyword id="KW-1185">Reference proteome</keyword>
<organism>
    <name type="scientific">Schizosaccharomyces pombe (strain 972 / ATCC 24843)</name>
    <name type="common">Fission yeast</name>
    <dbReference type="NCBI Taxonomy" id="284812"/>
    <lineage>
        <taxon>Eukaryota</taxon>
        <taxon>Fungi</taxon>
        <taxon>Dikarya</taxon>
        <taxon>Ascomycota</taxon>
        <taxon>Taphrinomycotina</taxon>
        <taxon>Schizosaccharomycetes</taxon>
        <taxon>Schizosaccharomycetales</taxon>
        <taxon>Schizosaccharomycetaceae</taxon>
        <taxon>Schizosaccharomyces</taxon>
    </lineage>
</organism>
<gene>
    <name type="primary">sir1</name>
    <name type="ORF">SPAC10F6.01c</name>
    <name type="ORF">SPAC4C5.05c</name>
</gene>
<reference evidence="7" key="1">
    <citation type="journal article" date="2002" name="Nature">
        <title>The genome sequence of Schizosaccharomyces pombe.</title>
        <authorList>
            <person name="Wood V."/>
            <person name="Gwilliam R."/>
            <person name="Rajandream M.A."/>
            <person name="Lyne M.H."/>
            <person name="Lyne R."/>
            <person name="Stewart A."/>
            <person name="Sgouros J.G."/>
            <person name="Peat N."/>
            <person name="Hayles J."/>
            <person name="Baker S.G."/>
            <person name="Basham D."/>
            <person name="Bowman S."/>
            <person name="Brooks K."/>
            <person name="Brown D."/>
            <person name="Brown S."/>
            <person name="Chillingworth T."/>
            <person name="Churcher C.M."/>
            <person name="Collins M."/>
            <person name="Connor R."/>
            <person name="Cronin A."/>
            <person name="Davis P."/>
            <person name="Feltwell T."/>
            <person name="Fraser A."/>
            <person name="Gentles S."/>
            <person name="Goble A."/>
            <person name="Hamlin N."/>
            <person name="Harris D.E."/>
            <person name="Hidalgo J."/>
            <person name="Hodgson G."/>
            <person name="Holroyd S."/>
            <person name="Hornsby T."/>
            <person name="Howarth S."/>
            <person name="Huckle E.J."/>
            <person name="Hunt S."/>
            <person name="Jagels K."/>
            <person name="James K.D."/>
            <person name="Jones L."/>
            <person name="Jones M."/>
            <person name="Leather S."/>
            <person name="McDonald S."/>
            <person name="McLean J."/>
            <person name="Mooney P."/>
            <person name="Moule S."/>
            <person name="Mungall K.L."/>
            <person name="Murphy L.D."/>
            <person name="Niblett D."/>
            <person name="Odell C."/>
            <person name="Oliver K."/>
            <person name="O'Neil S."/>
            <person name="Pearson D."/>
            <person name="Quail M.A."/>
            <person name="Rabbinowitsch E."/>
            <person name="Rutherford K.M."/>
            <person name="Rutter S."/>
            <person name="Saunders D."/>
            <person name="Seeger K."/>
            <person name="Sharp S."/>
            <person name="Skelton J."/>
            <person name="Simmonds M.N."/>
            <person name="Squares R."/>
            <person name="Squares S."/>
            <person name="Stevens K."/>
            <person name="Taylor K."/>
            <person name="Taylor R.G."/>
            <person name="Tivey A."/>
            <person name="Walsh S.V."/>
            <person name="Warren T."/>
            <person name="Whitehead S."/>
            <person name="Woodward J.R."/>
            <person name="Volckaert G."/>
            <person name="Aert R."/>
            <person name="Robben J."/>
            <person name="Grymonprez B."/>
            <person name="Weltjens I."/>
            <person name="Vanstreels E."/>
            <person name="Rieger M."/>
            <person name="Schaefer M."/>
            <person name="Mueller-Auer S."/>
            <person name="Gabel C."/>
            <person name="Fuchs M."/>
            <person name="Duesterhoeft A."/>
            <person name="Fritzc C."/>
            <person name="Holzer E."/>
            <person name="Moestl D."/>
            <person name="Hilbert H."/>
            <person name="Borzym K."/>
            <person name="Langer I."/>
            <person name="Beck A."/>
            <person name="Lehrach H."/>
            <person name="Reinhardt R."/>
            <person name="Pohl T.M."/>
            <person name="Eger P."/>
            <person name="Zimmermann W."/>
            <person name="Wedler H."/>
            <person name="Wambutt R."/>
            <person name="Purnelle B."/>
            <person name="Goffeau A."/>
            <person name="Cadieu E."/>
            <person name="Dreano S."/>
            <person name="Gloux S."/>
            <person name="Lelaure V."/>
            <person name="Mottier S."/>
            <person name="Galibert F."/>
            <person name="Aves S.J."/>
            <person name="Xiang Z."/>
            <person name="Hunt C."/>
            <person name="Moore K."/>
            <person name="Hurst S.M."/>
            <person name="Lucas M."/>
            <person name="Rochet M."/>
            <person name="Gaillardin C."/>
            <person name="Tallada V.A."/>
            <person name="Garzon A."/>
            <person name="Thode G."/>
            <person name="Daga R.R."/>
            <person name="Cruzado L."/>
            <person name="Jimenez J."/>
            <person name="Sanchez M."/>
            <person name="del Rey F."/>
            <person name="Benito J."/>
            <person name="Dominguez A."/>
            <person name="Revuelta J.L."/>
            <person name="Moreno S."/>
            <person name="Armstrong J."/>
            <person name="Forsburg S.L."/>
            <person name="Cerutti L."/>
            <person name="Lowe T."/>
            <person name="McCombie W.R."/>
            <person name="Paulsen I."/>
            <person name="Potashkin J."/>
            <person name="Shpakovski G.V."/>
            <person name="Ussery D."/>
            <person name="Barrell B.G."/>
            <person name="Nurse P."/>
        </authorList>
    </citation>
    <scope>NUCLEOTIDE SEQUENCE [LARGE SCALE GENOMIC DNA]</scope>
    <source>
        <strain>972 / ATCC 24843</strain>
    </source>
</reference>
<reference evidence="6" key="2">
    <citation type="journal article" date="2006" name="Nat. Biotechnol.">
        <title>ORFeome cloning and global analysis of protein localization in the fission yeast Schizosaccharomyces pombe.</title>
        <authorList>
            <person name="Matsuyama A."/>
            <person name="Arai R."/>
            <person name="Yashiroda Y."/>
            <person name="Shirai A."/>
            <person name="Kamata A."/>
            <person name="Sekido S."/>
            <person name="Kobayashi Y."/>
            <person name="Hashimoto A."/>
            <person name="Hamamoto M."/>
            <person name="Hiraoka Y."/>
            <person name="Horinouchi S."/>
            <person name="Yoshida M."/>
        </authorList>
    </citation>
    <scope>SUBCELLULAR LOCATION [LARGE SCALE ANALYSIS]</scope>
</reference>
<sequence length="1473" mass="163844">MSVKASINNSQEAVSRIAFRCSDALYVVHPNNSILNGALTESLKDLKKFETLNVSGKVPHVLPLKSHADPFAHIADAILAEEEVASTQPKQITSVVASADALFFATPHLYKLAHEPLVAHVAIESTEAFDFASVRDTGFVILFSGNRPGDSSEAALEDTLETASLAHRLALKLNTGVLHFYSPVYDTTAALENIETLPSKEDAQHARVAHIPIEEKQEDSEKEGNIKEAFVPPKFDQPERDAATSEYLESLSIKPFEYSGSDDATDVLLVFGSAASELAKAAVTSSVAVAIVRVLRPWLPSKLQEVLPTSTKRLTVLEPITSLPRKWDPLYLDVLSSFVASGSSIELFAVRYGLSSSEQATEIIKAVRDNLSGALKPSLVCDFTDGVSQVFVPTPPSIEEAYHKLLHRVFKSRLNIVNDPASSATKQNIPSRLIISPQFALGSVLEYENQRRAFCDEVATLLKEKNSSVSSESLEVLSNWIVSVDNLESPVDPELVISELKKDSSAPIKSLLDRSEFFTNVSHWIIGSDAWAYDLGNSALHQVLCLEKNVNLLIVDTQPYSTREAVRSSSRKKDIGLYAMNFGNAYVASTALYSSYTQLISALLEADKFKGPSVVLAYLPYHSADDDAITVLQETKKAVDIGYWPLYRWTPALEDGEYSDFKLDSERIRRELKTFLERDNYLTQLTLRVPSLARTLTQSFGAEVRHQQNVDSRNALNKLIEGLSGPPLTILFASDGGTAENVAKRLQNRASARGSKCKIMAMDDFPIEELGNEKNVVVLVSTAGQGEFPQNGREFWEAIKGADLNLSELKYGVFGFGDYEYWPRKEDKIYYNRPGKQLDARFVELGAAPLVTLGLGNDQDPDGWETAYNLWEPELWKALGLDNVEIDIDEPKPITNEDIKQASNFLRGTIFEGLADESTGALAESDCQLTKFHGIYMQDDRDIRDERKKQGLEPAYGFMIRARMPAGVCTPEQWIAMDDISTKWGNHTLKITTRQTFQWHGVLKKNLRNTIRNIVKVFLTTLGACGDVARNVTCSSTPNNETIHDQLFAVSKQISNELLPTTSSYHEIWIEDPETVEKRKVAGEAVQDVEPLYGPTYLPRKFKVGVAAPPYNDVDVYTNDVALIAIIENDKVLGFNVGIGGGMGTTHNNKKTYPRLATVVGYVLTDKIMEVVKAILIVQRDNGDRENRKHARLKYTVDTLGVSTFVEKVEEVLGYKFEEARDHPQFIKNHDDFEGWHKTEKNKYWRSIFVENGRIENNGILQFKTGLRELAERLYTEKSEAEFRLTANQHVILFNVAENELGWINEHMAKYKLDNNAFSGLRLSSAACVALPTCGLAMAESERYLPKLITKVEEIVYEAGLQKDSIVMRMTGCPNGCSRPWVAEIACVGKAPNTYNLMLGGGFYGQRLNKLYRSSVQEKEILNLLRPLIKRYALEREDGEHFGDWVIRAGIITAVENGGANGAVHEGVSPEAF</sequence>